<comment type="function">
    <text evidence="1 3">Mu-conotoxins block voltage-gated sodium channels (Nav). Blocks reversibly sodium channels in molluskan neurons, but has no effect on sodium currents in bovine chromaffin cells or in rat brain synaptosomes (By similarity). Induces paralysis in mollusks (C.retripictus) (PubMed:28831846).</text>
</comment>
<comment type="subcellular location">
    <subcellularLocation>
        <location evidence="2">Secreted</location>
    </subcellularLocation>
</comment>
<comment type="tissue specificity">
    <text evidence="6">Expressed by the venom duct.</text>
</comment>
<comment type="domain">
    <text evidence="5">The cysteine framework is IV (CC-C-C-C-C).</text>
</comment>
<comment type="PTM">
    <text evidence="5">Contains 3 disulfide bonds. They are not added, since framework IV presents two different connectivities (I-V, II-III, IV-VI and I-III, II-V, IV-VI).</text>
</comment>
<comment type="mass spectrometry" mass="1775.6" method="Electrospray" evidence="3">
    <text>Monoisotopic mass.</text>
</comment>
<comment type="toxic dose">
    <text evidence="3">PD(50) is 0.2-0.4 nmol/g when injected into the foot of the freshwater snail C.retropictus.</text>
</comment>
<comment type="similarity">
    <text evidence="5">Belongs to the conotoxin M superfamily.</text>
</comment>
<organism>
    <name type="scientific">Conus pennaceus</name>
    <name type="common">Feathered cone</name>
    <name type="synonym">Conus episcopus</name>
    <dbReference type="NCBI Taxonomy" id="37335"/>
    <lineage>
        <taxon>Eukaryota</taxon>
        <taxon>Metazoa</taxon>
        <taxon>Spiralia</taxon>
        <taxon>Lophotrochozoa</taxon>
        <taxon>Mollusca</taxon>
        <taxon>Gastropoda</taxon>
        <taxon>Caenogastropoda</taxon>
        <taxon>Neogastropoda</taxon>
        <taxon>Conoidea</taxon>
        <taxon>Conidae</taxon>
        <taxon>Conus</taxon>
        <taxon>Darioconus</taxon>
    </lineage>
</organism>
<accession>Q9BP55</accession>
<sequence length="41" mass="4647">DQPAERMQDDISSEHHPFFDPVKRCCKYGWTCVLGCSPCGC</sequence>
<evidence type="ECO:0000250" key="1"/>
<evidence type="ECO:0000269" key="2">
    <source>
    </source>
</evidence>
<evidence type="ECO:0000269" key="3">
    <source>
    </source>
</evidence>
<evidence type="ECO:0000303" key="4">
    <source>
    </source>
</evidence>
<evidence type="ECO:0000305" key="5"/>
<evidence type="ECO:0000305" key="6">
    <source>
    </source>
</evidence>
<evidence type="ECO:0000305" key="7">
    <source>
    </source>
</evidence>
<evidence type="ECO:0000312" key="8">
    <source>
        <dbReference type="EMBL" id="AAG60513.1"/>
    </source>
</evidence>
<protein>
    <recommendedName>
        <fullName evidence="4">Mu-conotoxin pn4c</fullName>
    </recommendedName>
    <alternativeName>
        <fullName evidence="8">Mu-conotoxin-like PnMMSK-D013</fullName>
    </alternativeName>
</protein>
<dbReference type="EMBL" id="AF215092">
    <property type="protein sequence ID" value="AAG60513.1"/>
    <property type="molecule type" value="mRNA"/>
</dbReference>
<dbReference type="ConoServer" id="770">
    <property type="toxin name" value="Pn4.1 precursor"/>
</dbReference>
<dbReference type="GO" id="GO:0005576">
    <property type="term" value="C:extracellular region"/>
    <property type="evidence" value="ECO:0007669"/>
    <property type="project" value="UniProtKB-SubCell"/>
</dbReference>
<dbReference type="GO" id="GO:0017080">
    <property type="term" value="F:sodium channel regulator activity"/>
    <property type="evidence" value="ECO:0007669"/>
    <property type="project" value="UniProtKB-KW"/>
</dbReference>
<dbReference type="GO" id="GO:0090729">
    <property type="term" value="F:toxin activity"/>
    <property type="evidence" value="ECO:0007669"/>
    <property type="project" value="UniProtKB-KW"/>
</dbReference>
<name>CM4C_CONPE</name>
<reference key="1">
    <citation type="journal article" date="2001" name="Mol. Biol. Evol.">
        <title>Mechanisms for evolving hypervariability: the case of conopeptides.</title>
        <authorList>
            <person name="Conticello S.G."/>
            <person name="Gilad Y."/>
            <person name="Avidan N."/>
            <person name="Ben-Asher E."/>
            <person name="Levy Z."/>
            <person name="Fainzilber M."/>
        </authorList>
    </citation>
    <scope>NUCLEOTIDE SEQUENCE [MRNA]</scope>
    <source>
        <tissue>Venom duct</tissue>
    </source>
</reference>
<reference key="2">
    <citation type="journal article" date="2017" name="Biosci. Biotechnol. Biochem.">
        <title>Isolation, structural identification and biological characterization of two conopeptides from the Conus pennaceus venom.</title>
        <authorList>
            <person name="Abdel-Wahab M."/>
            <person name="Miyashita M."/>
            <person name="Ota Y."/>
            <person name="Juichi H."/>
            <person name="Okabe R."/>
            <person name="Sarhan M."/>
            <person name="Fouda M."/>
            <person name="Abdel-Rahman M."/>
            <person name="Saber S."/>
            <person name="Nakagawa Y."/>
        </authorList>
    </citation>
    <scope>PROTEIN SEQUENCE OF 25-41</scope>
    <scope>MASS SPECTROMETRY</scope>
    <scope>SUBCELLULAR LOCATION</scope>
    <scope>FUNCTION</scope>
    <scope>BIOASSAY</scope>
    <scope>SYNTHESIS OF 25-41</scope>
    <scope>TOXIC DOSE</scope>
    <source>
        <tissue>Venom</tissue>
    </source>
</reference>
<feature type="propeptide" id="PRO_0000404928" evidence="1">
    <location>
        <begin position="1" status="less than"/>
        <end position="24"/>
    </location>
</feature>
<feature type="peptide" id="PRO_0000404929" description="Mu-conotoxin pn4c" evidence="3">
    <location>
        <begin position="25"/>
        <end position="41"/>
    </location>
</feature>
<feature type="unsure residue" description="L or I" evidence="7">
    <location>
        <position position="34"/>
    </location>
</feature>
<feature type="non-terminal residue">
    <location>
        <position position="1"/>
    </location>
</feature>
<proteinExistence type="evidence at protein level"/>
<keyword id="KW-0165">Cleavage on pair of basic residues</keyword>
<keyword id="KW-0903">Direct protein sequencing</keyword>
<keyword id="KW-1015">Disulfide bond</keyword>
<keyword id="KW-0872">Ion channel impairing toxin</keyword>
<keyword id="KW-0528">Neurotoxin</keyword>
<keyword id="KW-0964">Secreted</keyword>
<keyword id="KW-0800">Toxin</keyword>
<keyword id="KW-0738">Voltage-gated sodium channel impairing toxin</keyword>